<dbReference type="GO" id="GO:0005576">
    <property type="term" value="C:extracellular region"/>
    <property type="evidence" value="ECO:0007669"/>
    <property type="project" value="UniProtKB-SubCell"/>
</dbReference>
<dbReference type="GO" id="GO:0007218">
    <property type="term" value="P:neuropeptide signaling pathway"/>
    <property type="evidence" value="ECO:0007669"/>
    <property type="project" value="UniProtKB-KW"/>
</dbReference>
<dbReference type="InterPro" id="IPR013231">
    <property type="entry name" value="Periviscerokinin"/>
</dbReference>
<dbReference type="Pfam" id="PF08259">
    <property type="entry name" value="Periviscerokin"/>
    <property type="match status" value="1"/>
</dbReference>
<protein>
    <recommendedName>
        <fullName>Periviscerokinin-3</fullName>
        <shortName>BlaCr-PVK-3</shortName>
        <shortName>PVK-3</shortName>
    </recommendedName>
</protein>
<sequence>GSSGMIPFPRV</sequence>
<feature type="peptide" id="PRO_0000044282" description="Periviscerokinin-3">
    <location>
        <begin position="1"/>
        <end position="11"/>
    </location>
</feature>
<feature type="modified residue" description="Valine amide" evidence="1 2">
    <location>
        <position position="11"/>
    </location>
</feature>
<name>PVK3_BLACR</name>
<accession>P83933</accession>
<accession>P82700</accession>
<comment type="function">
    <text evidence="1">Mediates visceral muscle contractile activity (myotropic activity).</text>
</comment>
<comment type="subcellular location">
    <subcellularLocation>
        <location>Secreted</location>
    </subcellularLocation>
</comment>
<comment type="mass spectrometry"/>
<comment type="similarity">
    <text evidence="3">Belongs to the periviscerokinin family.</text>
</comment>
<proteinExistence type="evidence at protein level"/>
<reference key="1">
    <citation type="journal article" date="2000" name="Eur. J. Biochem.">
        <title>Identification of novel periviscerokinins from single neurohaemal release sites in insects. MS/MS fragmentation complemented by Edman degradation.</title>
        <authorList>
            <person name="Predel R."/>
            <person name="Kellner R."/>
            <person name="Baggerman G."/>
            <person name="Steinmetzer T."/>
            <person name="Schoofs L."/>
        </authorList>
    </citation>
    <scope>PROTEIN SEQUENCE</scope>
    <scope>FUNCTION</scope>
    <scope>MASS SPECTROMETRY</scope>
    <scope>AMIDATION AT VAL-11</scope>
    <source>
        <tissue>Abdominal perisympathetic organs</tissue>
    </source>
</reference>
<reference key="2">
    <citation type="journal article" date="2009" name="BMC Evol. Biol.">
        <title>A proteomic approach for studying insect phylogeny: CAPA peptides of ancient insect taxa (Dictyoptera, Blattoptera) as a test case.</title>
        <authorList>
            <person name="Roth S."/>
            <person name="Fromm B."/>
            <person name="Gaede G."/>
            <person name="Predel R."/>
        </authorList>
    </citation>
    <scope>PROTEIN SEQUENCE</scope>
    <scope>AMIDATION AT VAL-11</scope>
    <source>
        <tissue>Abdominal perisympathetic organs</tissue>
    </source>
</reference>
<keyword id="KW-0027">Amidation</keyword>
<keyword id="KW-0903">Direct protein sequencing</keyword>
<keyword id="KW-0527">Neuropeptide</keyword>
<keyword id="KW-0964">Secreted</keyword>
<organism>
    <name type="scientific">Blaberus craniifer</name>
    <name type="common">Death's head cockroach</name>
    <dbReference type="NCBI Taxonomy" id="6982"/>
    <lineage>
        <taxon>Eukaryota</taxon>
        <taxon>Metazoa</taxon>
        <taxon>Ecdysozoa</taxon>
        <taxon>Arthropoda</taxon>
        <taxon>Hexapoda</taxon>
        <taxon>Insecta</taxon>
        <taxon>Pterygota</taxon>
        <taxon>Neoptera</taxon>
        <taxon>Polyneoptera</taxon>
        <taxon>Dictyoptera</taxon>
        <taxon>Blattodea</taxon>
        <taxon>Blaberoidea</taxon>
        <taxon>Blaberidae</taxon>
        <taxon>Blaberinae</taxon>
        <taxon>Blaberus</taxon>
    </lineage>
</organism>
<evidence type="ECO:0000269" key="1">
    <source>
    </source>
</evidence>
<evidence type="ECO:0000269" key="2">
    <source>
    </source>
</evidence>
<evidence type="ECO:0000305" key="3"/>